<comment type="function">
    <text>Inhibits trypsin.</text>
</comment>
<comment type="subcellular location">
    <subcellularLocation>
        <location>Secreted</location>
    </subcellularLocation>
</comment>
<comment type="domain">
    <text evidence="1">The presence of a 'disulfide through disulfide knot' structurally defines this protein as a knottin.</text>
</comment>
<comment type="similarity">
    <text evidence="2">Belongs to the protease inhibitor I7 (squash-type serine protease inhibitor) family.</text>
</comment>
<accession>Q9S8I2</accession>
<evidence type="ECO:0000250" key="1"/>
<evidence type="ECO:0000305" key="2"/>
<organism>
    <name type="scientific">Luffa aegyptiaca</name>
    <name type="common">Sponge gourd</name>
    <name type="synonym">Luffa cylindrica</name>
    <dbReference type="NCBI Taxonomy" id="3670"/>
    <lineage>
        <taxon>Eukaryota</taxon>
        <taxon>Viridiplantae</taxon>
        <taxon>Streptophyta</taxon>
        <taxon>Embryophyta</taxon>
        <taxon>Tracheophyta</taxon>
        <taxon>Spermatophyta</taxon>
        <taxon>Magnoliopsida</taxon>
        <taxon>eudicotyledons</taxon>
        <taxon>Gunneridae</taxon>
        <taxon>Pentapetalae</taxon>
        <taxon>rosids</taxon>
        <taxon>fabids</taxon>
        <taxon>Cucurbitales</taxon>
        <taxon>Cucurbitaceae</taxon>
        <taxon>Sicyoeae</taxon>
        <taxon>Luffa</taxon>
    </lineage>
</organism>
<dbReference type="SMR" id="Q9S8I2"/>
<dbReference type="GO" id="GO:0005576">
    <property type="term" value="C:extracellular region"/>
    <property type="evidence" value="ECO:0007669"/>
    <property type="project" value="UniProtKB-SubCell"/>
</dbReference>
<dbReference type="GO" id="GO:0004867">
    <property type="term" value="F:serine-type endopeptidase inhibitor activity"/>
    <property type="evidence" value="ECO:0007669"/>
    <property type="project" value="UniProtKB-KW"/>
</dbReference>
<dbReference type="CDD" id="cd00150">
    <property type="entry name" value="PlantTI"/>
    <property type="match status" value="1"/>
</dbReference>
<dbReference type="Gene3D" id="4.10.75.20">
    <property type="match status" value="1"/>
</dbReference>
<dbReference type="InterPro" id="IPR000737">
    <property type="entry name" value="Prot_inh_squash"/>
</dbReference>
<dbReference type="InterPro" id="IPR011052">
    <property type="entry name" value="Proteinase_amylase_inhib_sf"/>
</dbReference>
<dbReference type="Pfam" id="PF00299">
    <property type="entry name" value="Squash"/>
    <property type="match status" value="1"/>
</dbReference>
<dbReference type="PRINTS" id="PR00293">
    <property type="entry name" value="SQUASHINHBTR"/>
</dbReference>
<dbReference type="SMART" id="SM00286">
    <property type="entry name" value="PTI"/>
    <property type="match status" value="1"/>
</dbReference>
<dbReference type="SUPFAM" id="SSF57027">
    <property type="entry name" value="Plant inhibitors of proteinases and amylases"/>
    <property type="match status" value="1"/>
</dbReference>
<dbReference type="PROSITE" id="PS00286">
    <property type="entry name" value="SQUASH_INHIBITOR"/>
    <property type="match status" value="1"/>
</dbReference>
<reference key="1">
    <citation type="journal article" date="1994" name="J. Biochem.">
        <title>Inhibition of serine proteases of the blood coagulation system by squash family protease inhibitors.</title>
        <authorList>
            <person name="Hayashi K."/>
            <person name="Takehisa T."/>
            <person name="Hamato N."/>
            <person name="Takano R."/>
            <person name="Hara S."/>
            <person name="Miyata T."/>
            <person name="Kato H."/>
        </authorList>
    </citation>
    <scope>PROTEIN SEQUENCE</scope>
</reference>
<name>ITR3_LUFAE</name>
<keyword id="KW-0903">Direct protein sequencing</keyword>
<keyword id="KW-1015">Disulfide bond</keyword>
<keyword id="KW-0960">Knottin</keyword>
<keyword id="KW-0646">Protease inhibitor</keyword>
<keyword id="KW-0964">Secreted</keyword>
<keyword id="KW-0722">Serine protease inhibitor</keyword>
<protein>
    <recommendedName>
        <fullName>Trypsin inhibitor 3</fullName>
    </recommendedName>
    <alternativeName>
        <fullName>LCTI-III</fullName>
    </alternativeName>
    <alternativeName>
        <fullName>Trypsin inhibitor III</fullName>
    </alternativeName>
</protein>
<feature type="peptide" id="PRO_0000044384" description="Trypsin inhibitor 3">
    <location>
        <begin position="1"/>
        <end position="29"/>
    </location>
</feature>
<feature type="site" description="Reactive bond">
    <location>
        <begin position="5"/>
        <end position="6"/>
    </location>
</feature>
<feature type="disulfide bond" evidence="1">
    <location>
        <begin position="3"/>
        <end position="20"/>
    </location>
</feature>
<feature type="disulfide bond" evidence="1">
    <location>
        <begin position="10"/>
        <end position="22"/>
    </location>
</feature>
<feature type="disulfide bond" evidence="1">
    <location>
        <begin position="16"/>
        <end position="28"/>
    </location>
</feature>
<sequence length="29" mass="3182">RICPRILMECSSDSDCLAECICLENGFCG</sequence>
<proteinExistence type="evidence at protein level"/>